<feature type="chain" id="PRO_0000153631" description="Ig heavy chain C region">
    <location>
        <begin position="1" status="less than"/>
        <end position="393"/>
    </location>
</feature>
<feature type="domain" description="Ig-like 1">
    <location>
        <begin position="63"/>
        <end position="157"/>
    </location>
</feature>
<feature type="domain" description="Ig-like 2">
    <location>
        <begin position="168"/>
        <end position="260"/>
    </location>
</feature>
<feature type="domain" description="Ig-like 3">
    <location>
        <begin position="270"/>
        <end position="370"/>
    </location>
</feature>
<feature type="glycosylation site" description="N-linked (GlcNAc...) asparagine" evidence="1">
    <location>
        <position position="119"/>
    </location>
</feature>
<feature type="glycosylation site" description="N-linked (GlcNAc...) asparagine" evidence="1">
    <location>
        <position position="155"/>
    </location>
</feature>
<feature type="glycosylation site" description="N-linked (GlcNAc...) asparagine" evidence="1">
    <location>
        <position position="200"/>
    </location>
</feature>
<feature type="glycosylation site" description="N-linked (GlcNAc...) asparagine" evidence="1">
    <location>
        <position position="230"/>
    </location>
</feature>
<feature type="glycosylation site" description="N-linked (GlcNAc...) asparagine" evidence="1">
    <location>
        <position position="329"/>
    </location>
</feature>
<feature type="glycosylation site" description="N-linked (GlcNAc...) asparagine" evidence="1">
    <location>
        <position position="366"/>
    </location>
</feature>
<feature type="glycosylation site" description="N-linked (GlcNAc...) asparagine" evidence="1">
    <location>
        <position position="370"/>
    </location>
</feature>
<feature type="glycosylation site" description="N-linked (GlcNAc...) asparagine" evidence="1">
    <location>
        <position position="380"/>
    </location>
</feature>
<feature type="non-terminal residue">
    <location>
        <position position="1"/>
    </location>
</feature>
<protein>
    <recommendedName>
        <fullName>Ig heavy chain C region</fullName>
    </recommendedName>
    <alternativeName>
        <fullName>Clone 6121</fullName>
    </alternativeName>
</protein>
<proteinExistence type="evidence at transcript level"/>
<sequence length="393" mass="43082">EPITTGLKTYPSVLNKKGTYTQSSQLTITESEVGSSKIYCEVRRGESVWIKEIPDCKGDKVHPTVILTQSSSEEITSRRFATVLCSIIDFHPESITVSWLKDGQHMESGFVTSPTCGVNGTFSATSRLTVPAREWFTNKVYTCQVSHQGVTQSRNITGSQVPCSCNDPVIKLLPPSIEQVLLEATVTLNCIVSNAPYGVNVSWTQEQKSLKSEIAVQPGEDADSVISTVNISTQAWLSGAEFYCVVNHQDLPTPLRASIHKEEVKDLREPSVSILLSPAEDVSAQRFLSLTCLVRGFSPREIFVKWTINDKSVNPGNYKNTEVMAENDNSSYFIYSLLSIAAEEWASGASYSCVVGHEAIPLKIINRTVNKSSGKPSFVNISLALLDTVNSCQ</sequence>
<organism>
    <name type="scientific">Heterodontus francisci</name>
    <name type="common">Horn shark</name>
    <name type="synonym">Cestracion francisci</name>
    <dbReference type="NCBI Taxonomy" id="7792"/>
    <lineage>
        <taxon>Eukaryota</taxon>
        <taxon>Metazoa</taxon>
        <taxon>Chordata</taxon>
        <taxon>Craniata</taxon>
        <taxon>Vertebrata</taxon>
        <taxon>Chondrichthyes</taxon>
        <taxon>Elasmobranchii</taxon>
        <taxon>Galeomorphii</taxon>
        <taxon>Heterodontoidea</taxon>
        <taxon>Heterodontiformes</taxon>
        <taxon>Heterodontidae</taxon>
        <taxon>Heterodontus</taxon>
    </lineage>
</organism>
<evidence type="ECO:0000255" key="1"/>
<dbReference type="EMBL" id="X07782">
    <property type="protein sequence ID" value="CAA30615.1"/>
    <property type="molecule type" value="mRNA"/>
</dbReference>
<dbReference type="PIR" id="S01852">
    <property type="entry name" value="HVRKC1"/>
</dbReference>
<dbReference type="SMR" id="P23086"/>
<dbReference type="CDD" id="cd00098">
    <property type="entry name" value="IgC1"/>
    <property type="match status" value="1"/>
</dbReference>
<dbReference type="CDD" id="cd05768">
    <property type="entry name" value="IgC1_CH3_IgAGD_CH4_IgAEM"/>
    <property type="match status" value="1"/>
</dbReference>
<dbReference type="FunFam" id="2.60.40.10:FF:000463">
    <property type="entry name" value="Immunoglobulin heavy constant gamma 1"/>
    <property type="match status" value="2"/>
</dbReference>
<dbReference type="Gene3D" id="2.60.40.10">
    <property type="entry name" value="Immunoglobulins"/>
    <property type="match status" value="4"/>
</dbReference>
<dbReference type="InterPro" id="IPR007110">
    <property type="entry name" value="Ig-like_dom"/>
</dbReference>
<dbReference type="InterPro" id="IPR036179">
    <property type="entry name" value="Ig-like_dom_sf"/>
</dbReference>
<dbReference type="InterPro" id="IPR013783">
    <property type="entry name" value="Ig-like_fold"/>
</dbReference>
<dbReference type="InterPro" id="IPR003006">
    <property type="entry name" value="Ig/MHC_CS"/>
</dbReference>
<dbReference type="InterPro" id="IPR003597">
    <property type="entry name" value="Ig_C1-set"/>
</dbReference>
<dbReference type="InterPro" id="IPR050380">
    <property type="entry name" value="Immune_Resp_Modulators"/>
</dbReference>
<dbReference type="PANTHER" id="PTHR23411">
    <property type="entry name" value="TAPASIN"/>
    <property type="match status" value="1"/>
</dbReference>
<dbReference type="Pfam" id="PF07654">
    <property type="entry name" value="C1-set"/>
    <property type="match status" value="3"/>
</dbReference>
<dbReference type="SMART" id="SM00407">
    <property type="entry name" value="IGc1"/>
    <property type="match status" value="3"/>
</dbReference>
<dbReference type="SUPFAM" id="SSF48726">
    <property type="entry name" value="Immunoglobulin"/>
    <property type="match status" value="4"/>
</dbReference>
<dbReference type="PROSITE" id="PS50835">
    <property type="entry name" value="IG_LIKE"/>
    <property type="match status" value="3"/>
</dbReference>
<dbReference type="PROSITE" id="PS00290">
    <property type="entry name" value="IG_MHC"/>
    <property type="match status" value="3"/>
</dbReference>
<accession>P23086</accession>
<keyword id="KW-0325">Glycoprotein</keyword>
<keyword id="KW-0393">Immunoglobulin domain</keyword>
<keyword id="KW-0677">Repeat</keyword>
<reference key="1">
    <citation type="journal article" date="1988" name="EMBO J.">
        <title>Complete structure and organization of immunoglobulin heavy chain constant region genes in a phylogenetically primitive vertebrate.</title>
        <authorList>
            <person name="Kokubu F."/>
            <person name="Hinds K."/>
            <person name="Litman R."/>
            <person name="Shamblott M.J."/>
            <person name="Litman G.W."/>
        </authorList>
    </citation>
    <scope>NUCLEOTIDE SEQUENCE [MRNA]</scope>
    <source>
        <tissue>Spleen</tissue>
    </source>
</reference>
<name>HVC3_HETFR</name>